<gene>
    <name evidence="1" type="primary">sat</name>
    <name type="ordered locus">COSY_0089</name>
</gene>
<reference key="1">
    <citation type="journal article" date="2007" name="Curr. Biol.">
        <title>Reduced genome of the thioautotrophic intracellular symbiont in a deep-sea clam, Calyptogena okutanii.</title>
        <authorList>
            <person name="Kuwahara H."/>
            <person name="Yoshida T."/>
            <person name="Takaki Y."/>
            <person name="Shimamura S."/>
            <person name="Nishi S."/>
            <person name="Harada M."/>
            <person name="Matsuyama K."/>
            <person name="Takishita K."/>
            <person name="Kawato M."/>
            <person name="Uematsu K."/>
            <person name="Fujiwara Y."/>
            <person name="Sato T."/>
            <person name="Kato C."/>
            <person name="Kitagawa M."/>
            <person name="Kato I."/>
            <person name="Maruyama T."/>
        </authorList>
    </citation>
    <scope>NUCLEOTIDE SEQUENCE [LARGE SCALE GENOMIC DNA]</scope>
    <source>
        <strain>HA</strain>
    </source>
</reference>
<sequence length="402" mass="44808">MSKLVPPHGGDKLKPLALEGNSLMAELEKAKLLLKVSCSSREVGDIIMMGIGGFTPLEGFMDNVNWQSVCDNMTMSSGLFWPIPITLSTNSEDIKQGDEVALVNGETDDIIATMVVSEKYSIDKSHECNTVYRTTEMAHPGVVMVMAQGKYNLAGSIKVLSDGNFPEKYGSLYMTPMETRAYFDDKGWKTIAAFQTRNPMHRSHEYLAKIAVEICDGVMIHSVLGGLKDGDIPADVRSEAISVLIKNYFVDNTILQSGYPLDMRYAGPREALLHALFRQNYGCSHLIVGRDHAGVNDYYGPFDAHNIFNVIANDALVTKALKFDWTFWCHKCGGISSMRTCPHNSEDRVLLSGTEVRKILSENKELPETFSRPEVAKVLQVYYASIKDEDKIEIKLNDHFTK</sequence>
<protein>
    <recommendedName>
        <fullName evidence="1">Sulfate adenylyltransferase</fullName>
        <ecNumber evidence="1">2.7.7.4</ecNumber>
    </recommendedName>
    <alternativeName>
        <fullName evidence="1">ATP-sulfurylase</fullName>
    </alternativeName>
    <alternativeName>
        <fullName evidence="1">Sulfate adenylate transferase</fullName>
        <shortName evidence="1">SAT</shortName>
    </alternativeName>
</protein>
<organism>
    <name type="scientific">Vesicomyosocius okutanii subsp. Calyptogena okutanii (strain HA)</name>
    <dbReference type="NCBI Taxonomy" id="412965"/>
    <lineage>
        <taxon>Bacteria</taxon>
        <taxon>Pseudomonadati</taxon>
        <taxon>Pseudomonadota</taxon>
        <taxon>Gammaproteobacteria</taxon>
        <taxon>Candidatus Pseudothioglobaceae</taxon>
        <taxon>Candidatus Vesicomyosocius</taxon>
    </lineage>
</organism>
<keyword id="KW-0067">ATP-binding</keyword>
<keyword id="KW-0547">Nucleotide-binding</keyword>
<keyword id="KW-0548">Nucleotidyltransferase</keyword>
<keyword id="KW-1185">Reference proteome</keyword>
<keyword id="KW-0808">Transferase</keyword>
<comment type="catalytic activity">
    <reaction evidence="1">
        <text>sulfate + ATP + H(+) = adenosine 5'-phosphosulfate + diphosphate</text>
        <dbReference type="Rhea" id="RHEA:18133"/>
        <dbReference type="ChEBI" id="CHEBI:15378"/>
        <dbReference type="ChEBI" id="CHEBI:16189"/>
        <dbReference type="ChEBI" id="CHEBI:30616"/>
        <dbReference type="ChEBI" id="CHEBI:33019"/>
        <dbReference type="ChEBI" id="CHEBI:58243"/>
        <dbReference type="EC" id="2.7.7.4"/>
    </reaction>
</comment>
<comment type="pathway">
    <text evidence="1">Sulfur metabolism; hydrogen sulfide biosynthesis; sulfite from sulfate: step 1/3.</text>
</comment>
<comment type="similarity">
    <text evidence="1">Belongs to the sulfate adenylyltransferase family.</text>
</comment>
<accession>A5CXS6</accession>
<proteinExistence type="inferred from homology"/>
<evidence type="ECO:0000255" key="1">
    <source>
        <dbReference type="HAMAP-Rule" id="MF_00066"/>
    </source>
</evidence>
<feature type="chain" id="PRO_0000340640" description="Sulfate adenylyltransferase">
    <location>
        <begin position="1"/>
        <end position="402"/>
    </location>
</feature>
<dbReference type="EC" id="2.7.7.4" evidence="1"/>
<dbReference type="EMBL" id="AP009247">
    <property type="protein sequence ID" value="BAF61225.1"/>
    <property type="molecule type" value="Genomic_DNA"/>
</dbReference>
<dbReference type="RefSeq" id="WP_011929495.1">
    <property type="nucleotide sequence ID" value="NC_009465.1"/>
</dbReference>
<dbReference type="SMR" id="A5CXS6"/>
<dbReference type="STRING" id="412965.COSY_0089"/>
<dbReference type="KEGG" id="vok:COSY_0089"/>
<dbReference type="eggNOG" id="COG2046">
    <property type="taxonomic scope" value="Bacteria"/>
</dbReference>
<dbReference type="HOGENOM" id="CLU_022950_1_1_6"/>
<dbReference type="OrthoDB" id="9804504at2"/>
<dbReference type="BRENDA" id="2.7.7.4">
    <property type="organism ID" value="11017"/>
</dbReference>
<dbReference type="UniPathway" id="UPA00140">
    <property type="reaction ID" value="UER00204"/>
</dbReference>
<dbReference type="Proteomes" id="UP000000247">
    <property type="component" value="Chromosome"/>
</dbReference>
<dbReference type="GO" id="GO:0005524">
    <property type="term" value="F:ATP binding"/>
    <property type="evidence" value="ECO:0007669"/>
    <property type="project" value="UniProtKB-KW"/>
</dbReference>
<dbReference type="GO" id="GO:0004781">
    <property type="term" value="F:sulfate adenylyltransferase (ATP) activity"/>
    <property type="evidence" value="ECO:0007669"/>
    <property type="project" value="UniProtKB-UniRule"/>
</dbReference>
<dbReference type="GO" id="GO:0070814">
    <property type="term" value="P:hydrogen sulfide biosynthetic process"/>
    <property type="evidence" value="ECO:0007669"/>
    <property type="project" value="UniProtKB-UniRule"/>
</dbReference>
<dbReference type="GO" id="GO:0000103">
    <property type="term" value="P:sulfate assimilation"/>
    <property type="evidence" value="ECO:0007669"/>
    <property type="project" value="UniProtKB-UniRule"/>
</dbReference>
<dbReference type="CDD" id="cd00517">
    <property type="entry name" value="ATPS"/>
    <property type="match status" value="1"/>
</dbReference>
<dbReference type="Gene3D" id="3.40.50.620">
    <property type="entry name" value="HUPs"/>
    <property type="match status" value="1"/>
</dbReference>
<dbReference type="Gene3D" id="3.10.400.10">
    <property type="entry name" value="Sulfate adenylyltransferase"/>
    <property type="match status" value="1"/>
</dbReference>
<dbReference type="HAMAP" id="MF_00066">
    <property type="entry name" value="Sulf_adenylyltr"/>
    <property type="match status" value="1"/>
</dbReference>
<dbReference type="InterPro" id="IPR025980">
    <property type="entry name" value="ATP-Sase_PUA-like_dom"/>
</dbReference>
<dbReference type="InterPro" id="IPR015947">
    <property type="entry name" value="PUA-like_sf"/>
</dbReference>
<dbReference type="InterPro" id="IPR014729">
    <property type="entry name" value="Rossmann-like_a/b/a_fold"/>
</dbReference>
<dbReference type="InterPro" id="IPR020792">
    <property type="entry name" value="SO4_adenylyltransferase_pro"/>
</dbReference>
<dbReference type="InterPro" id="IPR024951">
    <property type="entry name" value="Sulfurylase_cat_dom"/>
</dbReference>
<dbReference type="InterPro" id="IPR002650">
    <property type="entry name" value="Sulphate_adenylyltransferase"/>
</dbReference>
<dbReference type="NCBIfam" id="NF003166">
    <property type="entry name" value="PRK04149.1"/>
    <property type="match status" value="1"/>
</dbReference>
<dbReference type="NCBIfam" id="TIGR00339">
    <property type="entry name" value="sopT"/>
    <property type="match status" value="1"/>
</dbReference>
<dbReference type="PANTHER" id="PTHR43509">
    <property type="match status" value="1"/>
</dbReference>
<dbReference type="PANTHER" id="PTHR43509:SF1">
    <property type="entry name" value="SULFATE ADENYLYLTRANSFERASE"/>
    <property type="match status" value="1"/>
</dbReference>
<dbReference type="Pfam" id="PF01747">
    <property type="entry name" value="ATP-sulfurylase"/>
    <property type="match status" value="1"/>
</dbReference>
<dbReference type="Pfam" id="PF14306">
    <property type="entry name" value="PUA_2"/>
    <property type="match status" value="1"/>
</dbReference>
<dbReference type="SUPFAM" id="SSF52374">
    <property type="entry name" value="Nucleotidylyl transferase"/>
    <property type="match status" value="1"/>
</dbReference>
<dbReference type="SUPFAM" id="SSF88697">
    <property type="entry name" value="PUA domain-like"/>
    <property type="match status" value="1"/>
</dbReference>
<name>SAT_VESOH</name>